<evidence type="ECO:0000250" key="1"/>
<evidence type="ECO:0000255" key="2">
    <source>
        <dbReference type="HAMAP-Rule" id="MF_01320"/>
    </source>
</evidence>
<evidence type="ECO:0000256" key="3">
    <source>
        <dbReference type="SAM" id="MobiDB-lite"/>
    </source>
</evidence>
<evidence type="ECO:0000305" key="4"/>
<accession>Q8LVH2</accession>
<protein>
    <recommendedName>
        <fullName evidence="2">Large ribosomal subunit protein uL2cz/uL2cy</fullName>
    </recommendedName>
    <alternativeName>
        <fullName evidence="4">50S ribosomal protein L2, chloroplastic</fullName>
    </alternativeName>
</protein>
<geneLocation type="chloroplast"/>
<feature type="chain" id="PRO_0000129693" description="Large ribosomal subunit protein uL2cz/uL2cy">
    <location>
        <begin position="1"/>
        <end position="275"/>
    </location>
</feature>
<feature type="region of interest" description="Disordered" evidence="3">
    <location>
        <begin position="1"/>
        <end position="26"/>
    </location>
</feature>
<feature type="region of interest" description="Disordered" evidence="3">
    <location>
        <begin position="224"/>
        <end position="275"/>
    </location>
</feature>
<feature type="compositionally biased region" description="Polar residues" evidence="3">
    <location>
        <begin position="7"/>
        <end position="26"/>
    </location>
</feature>
<comment type="subunit">
    <text evidence="1">Part of the 50S ribosomal subunit.</text>
</comment>
<comment type="subcellular location">
    <subcellularLocation>
        <location>Plastid</location>
        <location>Chloroplast</location>
    </subcellularLocation>
</comment>
<comment type="similarity">
    <text evidence="4">Belongs to the universal ribosomal protein uL2 family.</text>
</comment>
<organism>
    <name type="scientific">Phaseolus angularis</name>
    <name type="common">Azuki bean</name>
    <name type="synonym">Vigna angularis</name>
    <dbReference type="NCBI Taxonomy" id="3914"/>
    <lineage>
        <taxon>Eukaryota</taxon>
        <taxon>Viridiplantae</taxon>
        <taxon>Streptophyta</taxon>
        <taxon>Embryophyta</taxon>
        <taxon>Tracheophyta</taxon>
        <taxon>Spermatophyta</taxon>
        <taxon>Magnoliopsida</taxon>
        <taxon>eudicotyledons</taxon>
        <taxon>Gunneridae</taxon>
        <taxon>Pentapetalae</taxon>
        <taxon>rosids</taxon>
        <taxon>fabids</taxon>
        <taxon>Fabales</taxon>
        <taxon>Fabaceae</taxon>
        <taxon>Papilionoideae</taxon>
        <taxon>50 kb inversion clade</taxon>
        <taxon>NPAAA clade</taxon>
        <taxon>indigoferoid/millettioid clade</taxon>
        <taxon>Phaseoleae</taxon>
        <taxon>Vigna</taxon>
    </lineage>
</organism>
<dbReference type="EMBL" id="AF536225">
    <property type="protein sequence ID" value="AAN04886.1"/>
    <property type="molecule type" value="Genomic_DNA"/>
</dbReference>
<dbReference type="EMBL" id="AF536226">
    <property type="protein sequence ID" value="AAN04893.1"/>
    <property type="molecule type" value="Genomic_DNA"/>
</dbReference>
<dbReference type="SMR" id="Q8LVH2"/>
<dbReference type="KEGG" id="var:15382680"/>
<dbReference type="KEGG" id="var:15382693"/>
<dbReference type="OrthoDB" id="1848840at2759"/>
<dbReference type="GO" id="GO:0009507">
    <property type="term" value="C:chloroplast"/>
    <property type="evidence" value="ECO:0007669"/>
    <property type="project" value="UniProtKB-SubCell"/>
</dbReference>
<dbReference type="GO" id="GO:0005762">
    <property type="term" value="C:mitochondrial large ribosomal subunit"/>
    <property type="evidence" value="ECO:0007669"/>
    <property type="project" value="TreeGrafter"/>
</dbReference>
<dbReference type="GO" id="GO:0019843">
    <property type="term" value="F:rRNA binding"/>
    <property type="evidence" value="ECO:0007669"/>
    <property type="project" value="UniProtKB-UniRule"/>
</dbReference>
<dbReference type="GO" id="GO:0003735">
    <property type="term" value="F:structural constituent of ribosome"/>
    <property type="evidence" value="ECO:0007669"/>
    <property type="project" value="InterPro"/>
</dbReference>
<dbReference type="GO" id="GO:0016740">
    <property type="term" value="F:transferase activity"/>
    <property type="evidence" value="ECO:0007669"/>
    <property type="project" value="InterPro"/>
</dbReference>
<dbReference type="GO" id="GO:0032543">
    <property type="term" value="P:mitochondrial translation"/>
    <property type="evidence" value="ECO:0007669"/>
    <property type="project" value="TreeGrafter"/>
</dbReference>
<dbReference type="FunFam" id="4.10.950.10:FF:000001">
    <property type="entry name" value="50S ribosomal protein L2"/>
    <property type="match status" value="1"/>
</dbReference>
<dbReference type="FunFam" id="2.30.30.30:FF:000008">
    <property type="entry name" value="50S ribosomal protein L2, chloroplastic"/>
    <property type="match status" value="1"/>
</dbReference>
<dbReference type="FunFam" id="2.40.50.140:FF:000029">
    <property type="entry name" value="50S ribosomal protein L2, chloroplastic"/>
    <property type="match status" value="1"/>
</dbReference>
<dbReference type="Gene3D" id="2.30.30.30">
    <property type="match status" value="1"/>
</dbReference>
<dbReference type="Gene3D" id="2.40.50.140">
    <property type="entry name" value="Nucleic acid-binding proteins"/>
    <property type="match status" value="1"/>
</dbReference>
<dbReference type="Gene3D" id="4.10.950.10">
    <property type="entry name" value="Ribosomal protein L2, domain 3"/>
    <property type="match status" value="1"/>
</dbReference>
<dbReference type="HAMAP" id="MF_01320_B">
    <property type="entry name" value="Ribosomal_uL2_B"/>
    <property type="match status" value="1"/>
</dbReference>
<dbReference type="InterPro" id="IPR012340">
    <property type="entry name" value="NA-bd_OB-fold"/>
</dbReference>
<dbReference type="InterPro" id="IPR014722">
    <property type="entry name" value="Rib_uL2_dom2"/>
</dbReference>
<dbReference type="InterPro" id="IPR002171">
    <property type="entry name" value="Ribosomal_uL2"/>
</dbReference>
<dbReference type="InterPro" id="IPR005880">
    <property type="entry name" value="Ribosomal_uL2_bac/org-type"/>
</dbReference>
<dbReference type="InterPro" id="IPR022669">
    <property type="entry name" value="Ribosomal_uL2_C"/>
</dbReference>
<dbReference type="InterPro" id="IPR022671">
    <property type="entry name" value="Ribosomal_uL2_CS"/>
</dbReference>
<dbReference type="InterPro" id="IPR014726">
    <property type="entry name" value="Ribosomal_uL2_dom3"/>
</dbReference>
<dbReference type="InterPro" id="IPR022666">
    <property type="entry name" value="Ribosomal_uL2_RNA-bd_dom"/>
</dbReference>
<dbReference type="InterPro" id="IPR008991">
    <property type="entry name" value="Translation_prot_SH3-like_sf"/>
</dbReference>
<dbReference type="NCBIfam" id="TIGR01171">
    <property type="entry name" value="rplB_bact"/>
    <property type="match status" value="1"/>
</dbReference>
<dbReference type="PANTHER" id="PTHR13691:SF5">
    <property type="entry name" value="LARGE RIBOSOMAL SUBUNIT PROTEIN UL2M"/>
    <property type="match status" value="1"/>
</dbReference>
<dbReference type="PANTHER" id="PTHR13691">
    <property type="entry name" value="RIBOSOMAL PROTEIN L2"/>
    <property type="match status" value="1"/>
</dbReference>
<dbReference type="Pfam" id="PF00181">
    <property type="entry name" value="Ribosomal_L2"/>
    <property type="match status" value="1"/>
</dbReference>
<dbReference type="Pfam" id="PF03947">
    <property type="entry name" value="Ribosomal_L2_C"/>
    <property type="match status" value="1"/>
</dbReference>
<dbReference type="PIRSF" id="PIRSF002158">
    <property type="entry name" value="Ribosomal_L2"/>
    <property type="match status" value="1"/>
</dbReference>
<dbReference type="SMART" id="SM01383">
    <property type="entry name" value="Ribosomal_L2"/>
    <property type="match status" value="1"/>
</dbReference>
<dbReference type="SMART" id="SM01382">
    <property type="entry name" value="Ribosomal_L2_C"/>
    <property type="match status" value="1"/>
</dbReference>
<dbReference type="SUPFAM" id="SSF50249">
    <property type="entry name" value="Nucleic acid-binding proteins"/>
    <property type="match status" value="1"/>
</dbReference>
<dbReference type="SUPFAM" id="SSF50104">
    <property type="entry name" value="Translation proteins SH3-like domain"/>
    <property type="match status" value="1"/>
</dbReference>
<dbReference type="PROSITE" id="PS00467">
    <property type="entry name" value="RIBOSOMAL_L2"/>
    <property type="match status" value="1"/>
</dbReference>
<sequence length="275" mass="29975">MAIHLYKTSTPSTRNGTVDSRQVKSNPRNHLIYGQHRCGKGRNARGIITAGHRGGGHKRLYRQIDFRRNEKNIYGRIVTIEYDPNRNASICLIHYGDGEKKYILHPRGAIIGDTIVSGTEVPIKMGNALPLTDMPLGTAIHNIEITLGKGGQLARAAGAVAKLIAKEGKSATLKLPSGEVRLISKNCSATVGQVGNVGVNQKNLGRAGSKCWLGKRPIVRGVVMNPVDHPHGGGEGRAPIGRKKPATPWGFPALGRRSRKRKKYSDNLILRRRTK</sequence>
<reference key="1">
    <citation type="journal article" date="2002" name="DNA Res.">
        <title>Evolutionary re-organisation of a large operon in adzuki bean chloroplast DNA caused by inverted repeat movement.</title>
        <authorList>
            <person name="Perry A.S."/>
            <person name="Brennan S."/>
            <person name="Murphy D.J."/>
            <person name="Kavanagh T.A."/>
            <person name="Wolfe K.H."/>
        </authorList>
    </citation>
    <scope>NUCLEOTIDE SEQUENCE [GENOMIC DNA]</scope>
    <source>
        <strain>cv. Erimo-shozu</strain>
    </source>
</reference>
<keyword id="KW-0150">Chloroplast</keyword>
<keyword id="KW-0934">Plastid</keyword>
<keyword id="KW-0687">Ribonucleoprotein</keyword>
<keyword id="KW-0689">Ribosomal protein</keyword>
<proteinExistence type="inferred from homology"/>
<gene>
    <name type="primary">rpl2-A</name>
</gene>
<gene>
    <name type="primary">rpl2-B</name>
</gene>
<name>RK2_PHAAN</name>